<dbReference type="EC" id="6.3.5.-" evidence="1"/>
<dbReference type="EMBL" id="AE014291">
    <property type="protein sequence ID" value="AAN29827.1"/>
    <property type="molecule type" value="Genomic_DNA"/>
</dbReference>
<dbReference type="EMBL" id="CP002997">
    <property type="protein sequence ID" value="AEM18244.1"/>
    <property type="molecule type" value="Genomic_DNA"/>
</dbReference>
<dbReference type="RefSeq" id="WP_002964030.1">
    <property type="nucleotide sequence ID" value="NZ_KN046804.1"/>
</dbReference>
<dbReference type="SMR" id="P64198"/>
<dbReference type="GeneID" id="97533805"/>
<dbReference type="KEGG" id="bms:BR0899"/>
<dbReference type="KEGG" id="bsi:BS1330_I0895"/>
<dbReference type="PATRIC" id="fig|204722.21.peg.2689"/>
<dbReference type="HOGENOM" id="CLU_019240_0_0_5"/>
<dbReference type="PhylomeDB" id="P64198"/>
<dbReference type="Proteomes" id="UP000007104">
    <property type="component" value="Chromosome I"/>
</dbReference>
<dbReference type="GO" id="GO:0050566">
    <property type="term" value="F:asparaginyl-tRNA synthase (glutamine-hydrolyzing) activity"/>
    <property type="evidence" value="ECO:0007669"/>
    <property type="project" value="RHEA"/>
</dbReference>
<dbReference type="GO" id="GO:0005524">
    <property type="term" value="F:ATP binding"/>
    <property type="evidence" value="ECO:0007669"/>
    <property type="project" value="UniProtKB-KW"/>
</dbReference>
<dbReference type="GO" id="GO:0050567">
    <property type="term" value="F:glutaminyl-tRNA synthase (glutamine-hydrolyzing) activity"/>
    <property type="evidence" value="ECO:0007669"/>
    <property type="project" value="UniProtKB-UniRule"/>
</dbReference>
<dbReference type="GO" id="GO:0070681">
    <property type="term" value="P:glutaminyl-tRNAGln biosynthesis via transamidation"/>
    <property type="evidence" value="ECO:0007669"/>
    <property type="project" value="TreeGrafter"/>
</dbReference>
<dbReference type="GO" id="GO:0006412">
    <property type="term" value="P:translation"/>
    <property type="evidence" value="ECO:0007669"/>
    <property type="project" value="UniProtKB-UniRule"/>
</dbReference>
<dbReference type="FunFam" id="1.10.10.410:FF:000001">
    <property type="entry name" value="Aspartyl/glutamyl-tRNA(Asn/Gln) amidotransferase subunit B"/>
    <property type="match status" value="1"/>
</dbReference>
<dbReference type="Gene3D" id="1.10.10.410">
    <property type="match status" value="1"/>
</dbReference>
<dbReference type="Gene3D" id="1.10.150.380">
    <property type="entry name" value="GatB domain, N-terminal subdomain"/>
    <property type="match status" value="1"/>
</dbReference>
<dbReference type="HAMAP" id="MF_00121">
    <property type="entry name" value="GatB"/>
    <property type="match status" value="1"/>
</dbReference>
<dbReference type="InterPro" id="IPR017959">
    <property type="entry name" value="Asn/Gln-tRNA_amidoTrfase_suB/E"/>
</dbReference>
<dbReference type="InterPro" id="IPR006075">
    <property type="entry name" value="Asn/Gln-tRNA_Trfase_suB/E_cat"/>
</dbReference>
<dbReference type="InterPro" id="IPR018027">
    <property type="entry name" value="Asn/Gln_amidotransferase"/>
</dbReference>
<dbReference type="InterPro" id="IPR003789">
    <property type="entry name" value="Asn/Gln_tRNA_amidoTrase-B-like"/>
</dbReference>
<dbReference type="InterPro" id="IPR004413">
    <property type="entry name" value="GatB"/>
</dbReference>
<dbReference type="InterPro" id="IPR042114">
    <property type="entry name" value="GatB_C_1"/>
</dbReference>
<dbReference type="InterPro" id="IPR023168">
    <property type="entry name" value="GatB_Yqey_C_2"/>
</dbReference>
<dbReference type="InterPro" id="IPR017958">
    <property type="entry name" value="Gln-tRNA_amidoTrfase_suB_CS"/>
</dbReference>
<dbReference type="InterPro" id="IPR014746">
    <property type="entry name" value="Gln_synth/guanido_kin_cat_dom"/>
</dbReference>
<dbReference type="NCBIfam" id="TIGR00133">
    <property type="entry name" value="gatB"/>
    <property type="match status" value="1"/>
</dbReference>
<dbReference type="NCBIfam" id="NF004012">
    <property type="entry name" value="PRK05477.1-2"/>
    <property type="match status" value="1"/>
</dbReference>
<dbReference type="NCBIfam" id="NF004014">
    <property type="entry name" value="PRK05477.1-4"/>
    <property type="match status" value="1"/>
</dbReference>
<dbReference type="NCBIfam" id="NF004015">
    <property type="entry name" value="PRK05477.1-5"/>
    <property type="match status" value="1"/>
</dbReference>
<dbReference type="PANTHER" id="PTHR11659">
    <property type="entry name" value="GLUTAMYL-TRNA GLN AMIDOTRANSFERASE SUBUNIT B MITOCHONDRIAL AND PROKARYOTIC PET112-RELATED"/>
    <property type="match status" value="1"/>
</dbReference>
<dbReference type="PANTHER" id="PTHR11659:SF0">
    <property type="entry name" value="GLUTAMYL-TRNA(GLN) AMIDOTRANSFERASE SUBUNIT B, MITOCHONDRIAL"/>
    <property type="match status" value="1"/>
</dbReference>
<dbReference type="Pfam" id="PF02934">
    <property type="entry name" value="GatB_N"/>
    <property type="match status" value="1"/>
</dbReference>
<dbReference type="Pfam" id="PF02637">
    <property type="entry name" value="GatB_Yqey"/>
    <property type="match status" value="1"/>
</dbReference>
<dbReference type="SMART" id="SM00845">
    <property type="entry name" value="GatB_Yqey"/>
    <property type="match status" value="1"/>
</dbReference>
<dbReference type="SUPFAM" id="SSF89095">
    <property type="entry name" value="GatB/YqeY motif"/>
    <property type="match status" value="1"/>
</dbReference>
<dbReference type="SUPFAM" id="SSF55931">
    <property type="entry name" value="Glutamine synthetase/guanido kinase"/>
    <property type="match status" value="1"/>
</dbReference>
<dbReference type="PROSITE" id="PS01234">
    <property type="entry name" value="GATB"/>
    <property type="match status" value="1"/>
</dbReference>
<reference key="1">
    <citation type="journal article" date="2002" name="Proc. Natl. Acad. Sci. U.S.A.">
        <title>The Brucella suis genome reveals fundamental similarities between animal and plant pathogens and symbionts.</title>
        <authorList>
            <person name="Paulsen I.T."/>
            <person name="Seshadri R."/>
            <person name="Nelson K.E."/>
            <person name="Eisen J.A."/>
            <person name="Heidelberg J.F."/>
            <person name="Read T.D."/>
            <person name="Dodson R.J."/>
            <person name="Umayam L.A."/>
            <person name="Brinkac L.M."/>
            <person name="Beanan M.J."/>
            <person name="Daugherty S.C."/>
            <person name="DeBoy R.T."/>
            <person name="Durkin A.S."/>
            <person name="Kolonay J.F."/>
            <person name="Madupu R."/>
            <person name="Nelson W.C."/>
            <person name="Ayodeji B."/>
            <person name="Kraul M."/>
            <person name="Shetty J."/>
            <person name="Malek J.A."/>
            <person name="Van Aken S.E."/>
            <person name="Riedmuller S."/>
            <person name="Tettelin H."/>
            <person name="Gill S.R."/>
            <person name="White O."/>
            <person name="Salzberg S.L."/>
            <person name="Hoover D.L."/>
            <person name="Lindler L.E."/>
            <person name="Halling S.M."/>
            <person name="Boyle S.M."/>
            <person name="Fraser C.M."/>
        </authorList>
    </citation>
    <scope>NUCLEOTIDE SEQUENCE [LARGE SCALE GENOMIC DNA]</scope>
    <source>
        <strain>1330</strain>
    </source>
</reference>
<reference key="2">
    <citation type="journal article" date="2011" name="J. Bacteriol.">
        <title>Revised genome sequence of Brucella suis 1330.</title>
        <authorList>
            <person name="Tae H."/>
            <person name="Shallom S."/>
            <person name="Settlage R."/>
            <person name="Preston D."/>
            <person name="Adams L.G."/>
            <person name="Garner H.R."/>
        </authorList>
    </citation>
    <scope>NUCLEOTIDE SEQUENCE [LARGE SCALE GENOMIC DNA]</scope>
    <source>
        <strain>1330</strain>
    </source>
</reference>
<accession>P64198</accession>
<accession>G0K9C7</accession>
<accession>Q8YGT9</accession>
<evidence type="ECO:0000255" key="1">
    <source>
        <dbReference type="HAMAP-Rule" id="MF_00121"/>
    </source>
</evidence>
<name>GATB_BRUSU</name>
<protein>
    <recommendedName>
        <fullName evidence="1">Aspartyl/glutamyl-tRNA(Asn/Gln) amidotransferase subunit B</fullName>
        <shortName evidence="1">Asp/Glu-ADT subunit B</shortName>
        <ecNumber evidence="1">6.3.5.-</ecNumber>
    </recommendedName>
</protein>
<proteinExistence type="inferred from homology"/>
<comment type="function">
    <text evidence="1">Allows the formation of correctly charged Asn-tRNA(Asn) or Gln-tRNA(Gln) through the transamidation of misacylated Asp-tRNA(Asn) or Glu-tRNA(Gln) in organisms which lack either or both of asparaginyl-tRNA or glutaminyl-tRNA synthetases. The reaction takes place in the presence of glutamine and ATP through an activated phospho-Asp-tRNA(Asn) or phospho-Glu-tRNA(Gln).</text>
</comment>
<comment type="catalytic activity">
    <reaction evidence="1">
        <text>L-glutamyl-tRNA(Gln) + L-glutamine + ATP + H2O = L-glutaminyl-tRNA(Gln) + L-glutamate + ADP + phosphate + H(+)</text>
        <dbReference type="Rhea" id="RHEA:17521"/>
        <dbReference type="Rhea" id="RHEA-COMP:9681"/>
        <dbReference type="Rhea" id="RHEA-COMP:9684"/>
        <dbReference type="ChEBI" id="CHEBI:15377"/>
        <dbReference type="ChEBI" id="CHEBI:15378"/>
        <dbReference type="ChEBI" id="CHEBI:29985"/>
        <dbReference type="ChEBI" id="CHEBI:30616"/>
        <dbReference type="ChEBI" id="CHEBI:43474"/>
        <dbReference type="ChEBI" id="CHEBI:58359"/>
        <dbReference type="ChEBI" id="CHEBI:78520"/>
        <dbReference type="ChEBI" id="CHEBI:78521"/>
        <dbReference type="ChEBI" id="CHEBI:456216"/>
    </reaction>
</comment>
<comment type="catalytic activity">
    <reaction evidence="1">
        <text>L-aspartyl-tRNA(Asn) + L-glutamine + ATP + H2O = L-asparaginyl-tRNA(Asn) + L-glutamate + ADP + phosphate + 2 H(+)</text>
        <dbReference type="Rhea" id="RHEA:14513"/>
        <dbReference type="Rhea" id="RHEA-COMP:9674"/>
        <dbReference type="Rhea" id="RHEA-COMP:9677"/>
        <dbReference type="ChEBI" id="CHEBI:15377"/>
        <dbReference type="ChEBI" id="CHEBI:15378"/>
        <dbReference type="ChEBI" id="CHEBI:29985"/>
        <dbReference type="ChEBI" id="CHEBI:30616"/>
        <dbReference type="ChEBI" id="CHEBI:43474"/>
        <dbReference type="ChEBI" id="CHEBI:58359"/>
        <dbReference type="ChEBI" id="CHEBI:78515"/>
        <dbReference type="ChEBI" id="CHEBI:78516"/>
        <dbReference type="ChEBI" id="CHEBI:456216"/>
    </reaction>
</comment>
<comment type="subunit">
    <text evidence="1">Heterotrimer of A, B and C subunits.</text>
</comment>
<comment type="similarity">
    <text evidence="1">Belongs to the GatB/GatE family. GatB subfamily.</text>
</comment>
<gene>
    <name evidence="1" type="primary">gatB</name>
    <name type="ordered locus">BR0899</name>
    <name type="ordered locus">BS1330_I0895</name>
</gene>
<feature type="chain" id="PRO_0000148771" description="Aspartyl/glutamyl-tRNA(Asn/Gln) amidotransferase subunit B">
    <location>
        <begin position="1"/>
        <end position="500"/>
    </location>
</feature>
<sequence>MSIIDTRTPEPKRFISGATGDWEVVIGMEVHAQVTSESKLFSGASTAFGAEPNSNVSLVDAAMPGMLPVINLECVRQAVRTGIGLNAQINLKSVFDRKNYFYPDLPQGYQISQFKQPIVGEGKIMISVGPDNKGQFEDVEIGIERLHLEQDAGKSMHDQHPTMSYVDLNRSGVALMEIVSKPDLRSSDEARAYLTKLRTIVRYLGTCDGNMDEGSMRADVNVSVRRPGGEFGTRCEIKNVNSIRFVGQAIEYEARRQIAILEDGGVIDQETRLFDPVKGETRSMRSKEEAHDYRYFPDPDLLPLEFDQAFVDALAAKLPELPDVKKQRLVETLGISVYDASILVTEKAIADYYEAVAEGRDGKAAANWVINDLLGALNKAGKDIEESPISPAQLGAIIDLIKEGTISGKIAKDLFEIVWNEGGDPKKLVEERGMKQVTDTGAIEKAVDDVIAANPDKVEQAKAKPTLAGWFVGQVMKATGGKANPQAVNELVKSKLGIEE</sequence>
<organism>
    <name type="scientific">Brucella suis biovar 1 (strain 1330)</name>
    <dbReference type="NCBI Taxonomy" id="204722"/>
    <lineage>
        <taxon>Bacteria</taxon>
        <taxon>Pseudomonadati</taxon>
        <taxon>Pseudomonadota</taxon>
        <taxon>Alphaproteobacteria</taxon>
        <taxon>Hyphomicrobiales</taxon>
        <taxon>Brucellaceae</taxon>
        <taxon>Brucella/Ochrobactrum group</taxon>
        <taxon>Brucella</taxon>
    </lineage>
</organism>
<keyword id="KW-0067">ATP-binding</keyword>
<keyword id="KW-0436">Ligase</keyword>
<keyword id="KW-0547">Nucleotide-binding</keyword>
<keyword id="KW-0648">Protein biosynthesis</keyword>